<protein>
    <recommendedName>
        <fullName>Pyrimidine-specific ribonucleoside hydrolase RihB</fullName>
        <ecNumber>3.2.2.8</ecNumber>
    </recommendedName>
    <alternativeName>
        <fullName>Cytidine/uridine-specific hydrolase</fullName>
    </alternativeName>
</protein>
<accession>P33022</accession>
<accession>Q2MAR7</accession>
<keyword id="KW-0002">3D-structure</keyword>
<keyword id="KW-0106">Calcium</keyword>
<keyword id="KW-0326">Glycosidase</keyword>
<keyword id="KW-0378">Hydrolase</keyword>
<keyword id="KW-0479">Metal-binding</keyword>
<keyword id="KW-1185">Reference proteome</keyword>
<comment type="function">
    <text>Hydrolyzes cytidine or uridine to ribose and cytosine or uracil, respectively. Has a clear preference for cytidine over uridine. Strictly specific for ribonucleosides. Has a low but significant activity for the purine nucleoside xanthosine.</text>
</comment>
<comment type="catalytic activity">
    <reaction>
        <text>a pyrimidine ribonucleoside + H2O = a pyrimidine nucleobase + D-ribose</text>
        <dbReference type="Rhea" id="RHEA:56816"/>
        <dbReference type="ChEBI" id="CHEBI:15377"/>
        <dbReference type="ChEBI" id="CHEBI:26432"/>
        <dbReference type="ChEBI" id="CHEBI:47013"/>
        <dbReference type="ChEBI" id="CHEBI:141014"/>
        <dbReference type="EC" id="3.2.2.8"/>
    </reaction>
</comment>
<comment type="cofactor">
    <cofactor>
        <name>Ca(2+)</name>
        <dbReference type="ChEBI" id="CHEBI:29108"/>
    </cofactor>
    <text>Binds 1 Ca(2+) ion per monomer.</text>
</comment>
<comment type="subunit">
    <text evidence="3">Homotetramer.</text>
</comment>
<comment type="similarity">
    <text evidence="4">Belongs to the IUNH family. RihB subfamily.</text>
</comment>
<reference key="1">
    <citation type="submission" date="1993-10" db="EMBL/GenBank/DDBJ databases">
        <title>Automated multiplex sequencing of the E.coli genome.</title>
        <authorList>
            <person name="Richterich P."/>
            <person name="Lakey N."/>
            <person name="Gryan G."/>
            <person name="Jaehn L."/>
            <person name="Mintz L."/>
            <person name="Robison K."/>
            <person name="Church G.M."/>
        </authorList>
    </citation>
    <scope>NUCLEOTIDE SEQUENCE [LARGE SCALE GENOMIC DNA]</scope>
    <source>
        <strain>K12 / BHB2600</strain>
    </source>
</reference>
<reference key="2">
    <citation type="journal article" date="1997" name="Science">
        <title>The complete genome sequence of Escherichia coli K-12.</title>
        <authorList>
            <person name="Blattner F.R."/>
            <person name="Plunkett G. III"/>
            <person name="Bloch C.A."/>
            <person name="Perna N.T."/>
            <person name="Burland V."/>
            <person name="Riley M."/>
            <person name="Collado-Vides J."/>
            <person name="Glasner J.D."/>
            <person name="Rode C.K."/>
            <person name="Mayhew G.F."/>
            <person name="Gregor J."/>
            <person name="Davis N.W."/>
            <person name="Kirkpatrick H.A."/>
            <person name="Goeden M.A."/>
            <person name="Rose D.J."/>
            <person name="Mau B."/>
            <person name="Shao Y."/>
        </authorList>
    </citation>
    <scope>NUCLEOTIDE SEQUENCE [LARGE SCALE GENOMIC DNA]</scope>
    <source>
        <strain>K12 / MG1655 / ATCC 47076</strain>
    </source>
</reference>
<reference key="3">
    <citation type="journal article" date="2006" name="Mol. Syst. Biol.">
        <title>Highly accurate genome sequences of Escherichia coli K-12 strains MG1655 and W3110.</title>
        <authorList>
            <person name="Hayashi K."/>
            <person name="Morooka N."/>
            <person name="Yamamoto Y."/>
            <person name="Fujita K."/>
            <person name="Isono K."/>
            <person name="Choi S."/>
            <person name="Ohtsubo E."/>
            <person name="Baba T."/>
            <person name="Wanner B.L."/>
            <person name="Mori H."/>
            <person name="Horiuchi T."/>
        </authorList>
    </citation>
    <scope>NUCLEOTIDE SEQUENCE [LARGE SCALE GENOMIC DNA]</scope>
    <source>
        <strain>K12 / W3110 / ATCC 27325 / DSM 5911</strain>
    </source>
</reference>
<reference key="4">
    <citation type="journal article" date="2001" name="J. Biol. Chem.">
        <title>The RihA, RihB, and RihC ribonucleoside hydrolases of Escherichia coli. Substrate specificity, gene expression, and regulation.</title>
        <authorList>
            <person name="Petersen C."/>
            <person name="Moeller L.B."/>
        </authorList>
    </citation>
    <scope>CHARACTERIZATION</scope>
</reference>
<reference key="5">
    <citation type="journal article" date="2004" name="Structure">
        <title>Crystal structure to 1.7 A of the Escherichia coli pyrimidine nucleoside hydrolase YeiK, a novel candidate for cancer gene therapy.</title>
        <authorList>
            <person name="Giabbai B."/>
            <person name="Degano M."/>
        </authorList>
    </citation>
    <scope>X-RAY CRYSTALLOGRAPHY (1.7 ANGSTROMS) IN COMPLEX WITH CALCIUM IONS</scope>
    <scope>MUTAGENESIS OF HIS-82 AND HIS-239</scope>
    <scope>SUBUNIT</scope>
</reference>
<dbReference type="EC" id="3.2.2.8"/>
<dbReference type="EMBL" id="U00007">
    <property type="protein sequence ID" value="AAA60514.1"/>
    <property type="molecule type" value="Genomic_DNA"/>
</dbReference>
<dbReference type="EMBL" id="U00096">
    <property type="protein sequence ID" value="AAC75223.1"/>
    <property type="molecule type" value="Genomic_DNA"/>
</dbReference>
<dbReference type="EMBL" id="AP009048">
    <property type="protein sequence ID" value="BAE76639.1"/>
    <property type="molecule type" value="Genomic_DNA"/>
</dbReference>
<dbReference type="PIR" id="A64985">
    <property type="entry name" value="A64985"/>
</dbReference>
<dbReference type="RefSeq" id="NP_416667.1">
    <property type="nucleotide sequence ID" value="NC_000913.3"/>
</dbReference>
<dbReference type="RefSeq" id="WP_000415429.1">
    <property type="nucleotide sequence ID" value="NZ_LN832404.1"/>
</dbReference>
<dbReference type="PDB" id="1Q8F">
    <property type="method" value="X-ray"/>
    <property type="resolution" value="1.70 A"/>
    <property type="chains" value="A/B/C/D=1-313"/>
</dbReference>
<dbReference type="PDB" id="3B9X">
    <property type="method" value="X-ray"/>
    <property type="resolution" value="2.30 A"/>
    <property type="chains" value="A/B/C/D=1-313"/>
</dbReference>
<dbReference type="PDBsum" id="1Q8F"/>
<dbReference type="PDBsum" id="3B9X"/>
<dbReference type="SMR" id="P33022"/>
<dbReference type="BioGRID" id="4261071">
    <property type="interactions" value="8"/>
</dbReference>
<dbReference type="FunCoup" id="P33022">
    <property type="interactions" value="642"/>
</dbReference>
<dbReference type="IntAct" id="P33022">
    <property type="interactions" value="5"/>
</dbReference>
<dbReference type="STRING" id="511145.b2162"/>
<dbReference type="PaxDb" id="511145-b2162"/>
<dbReference type="EnsemblBacteria" id="AAC75223">
    <property type="protein sequence ID" value="AAC75223"/>
    <property type="gene ID" value="b2162"/>
</dbReference>
<dbReference type="GeneID" id="946646"/>
<dbReference type="KEGG" id="ecj:JW2149"/>
<dbReference type="KEGG" id="eco:b2162"/>
<dbReference type="KEGG" id="ecoc:C3026_12115"/>
<dbReference type="PATRIC" id="fig|1411691.4.peg.77"/>
<dbReference type="EchoBASE" id="EB1965"/>
<dbReference type="eggNOG" id="COG1957">
    <property type="taxonomic scope" value="Bacteria"/>
</dbReference>
<dbReference type="HOGENOM" id="CLU_036838_2_0_6"/>
<dbReference type="InParanoid" id="P33022"/>
<dbReference type="OMA" id="PNIKPFC"/>
<dbReference type="OrthoDB" id="9797882at2"/>
<dbReference type="PhylomeDB" id="P33022"/>
<dbReference type="BioCyc" id="EcoCyc:EG12030-MONOMER"/>
<dbReference type="BioCyc" id="MetaCyc:EG12030-MONOMER"/>
<dbReference type="BRENDA" id="3.2.2.8">
    <property type="organism ID" value="2026"/>
</dbReference>
<dbReference type="EvolutionaryTrace" id="P33022"/>
<dbReference type="PRO" id="PR:P33022"/>
<dbReference type="Proteomes" id="UP000000625">
    <property type="component" value="Chromosome"/>
</dbReference>
<dbReference type="GO" id="GO:0005829">
    <property type="term" value="C:cytosol"/>
    <property type="evidence" value="ECO:0000318"/>
    <property type="project" value="GO_Central"/>
</dbReference>
<dbReference type="GO" id="GO:0032991">
    <property type="term" value="C:protein-containing complex"/>
    <property type="evidence" value="ECO:0000314"/>
    <property type="project" value="EcoCyc"/>
</dbReference>
<dbReference type="GO" id="GO:0005509">
    <property type="term" value="F:calcium ion binding"/>
    <property type="evidence" value="ECO:0000314"/>
    <property type="project" value="EcoCyc"/>
</dbReference>
<dbReference type="GO" id="GO:0042802">
    <property type="term" value="F:identical protein binding"/>
    <property type="evidence" value="ECO:0000314"/>
    <property type="project" value="EcoCyc"/>
</dbReference>
<dbReference type="GO" id="GO:0008477">
    <property type="term" value="F:purine nucleosidase activity"/>
    <property type="evidence" value="ECO:0000318"/>
    <property type="project" value="GO_Central"/>
</dbReference>
<dbReference type="GO" id="GO:0045437">
    <property type="term" value="F:uridine nucleosidase activity"/>
    <property type="evidence" value="ECO:0000314"/>
    <property type="project" value="EcoCyc"/>
</dbReference>
<dbReference type="GO" id="GO:0051289">
    <property type="term" value="P:protein homotetramerization"/>
    <property type="evidence" value="ECO:0000314"/>
    <property type="project" value="EcoCyc"/>
</dbReference>
<dbReference type="GO" id="GO:0006152">
    <property type="term" value="P:purine nucleoside catabolic process"/>
    <property type="evidence" value="ECO:0000318"/>
    <property type="project" value="GO_Central"/>
</dbReference>
<dbReference type="GO" id="GO:0006206">
    <property type="term" value="P:pyrimidine nucleobase metabolic process"/>
    <property type="evidence" value="ECO:0007669"/>
    <property type="project" value="UniProtKB-UniRule"/>
</dbReference>
<dbReference type="GO" id="GO:0046133">
    <property type="term" value="P:pyrimidine ribonucleoside catabolic process"/>
    <property type="evidence" value="ECO:0000315"/>
    <property type="project" value="EcoCyc"/>
</dbReference>
<dbReference type="CDD" id="cd02651">
    <property type="entry name" value="nuc_hydro_IU_UC_XIUA"/>
    <property type="match status" value="1"/>
</dbReference>
<dbReference type="FunFam" id="3.90.245.10:FF:000003">
    <property type="entry name" value="Pyrimidine-specific ribonucleoside hydrolase RihB"/>
    <property type="match status" value="1"/>
</dbReference>
<dbReference type="Gene3D" id="3.90.245.10">
    <property type="entry name" value="Ribonucleoside hydrolase-like"/>
    <property type="match status" value="1"/>
</dbReference>
<dbReference type="HAMAP" id="MF_01433">
    <property type="entry name" value="Pyrim_hydro_RihB"/>
    <property type="match status" value="1"/>
</dbReference>
<dbReference type="InterPro" id="IPR015910">
    <property type="entry name" value="I/U_nuclsd_hydro_CS"/>
</dbReference>
<dbReference type="InterPro" id="IPR001910">
    <property type="entry name" value="Inosine/uridine_hydrolase_dom"/>
</dbReference>
<dbReference type="InterPro" id="IPR023186">
    <property type="entry name" value="IUNH"/>
</dbReference>
<dbReference type="InterPro" id="IPR022977">
    <property type="entry name" value="Pyrim_hydro_RihB"/>
</dbReference>
<dbReference type="InterPro" id="IPR036452">
    <property type="entry name" value="Ribo_hydro-like"/>
</dbReference>
<dbReference type="NCBIfam" id="NF007417">
    <property type="entry name" value="PRK09955.1"/>
    <property type="match status" value="1"/>
</dbReference>
<dbReference type="PANTHER" id="PTHR12304">
    <property type="entry name" value="INOSINE-URIDINE PREFERRING NUCLEOSIDE HYDROLASE"/>
    <property type="match status" value="1"/>
</dbReference>
<dbReference type="PANTHER" id="PTHR12304:SF4">
    <property type="entry name" value="URIDINE NUCLEOSIDASE"/>
    <property type="match status" value="1"/>
</dbReference>
<dbReference type="Pfam" id="PF01156">
    <property type="entry name" value="IU_nuc_hydro"/>
    <property type="match status" value="1"/>
</dbReference>
<dbReference type="SUPFAM" id="SSF53590">
    <property type="entry name" value="Nucleoside hydrolase"/>
    <property type="match status" value="1"/>
</dbReference>
<dbReference type="PROSITE" id="PS01247">
    <property type="entry name" value="IUNH"/>
    <property type="match status" value="1"/>
</dbReference>
<name>RIHB_ECOLI</name>
<sequence length="313" mass="33748">MEKRKIILDCDPGHDDAIAIMMAAKHPAIDLLGITIVAGNQTLDKTLINGLNVCQKLEINVPVYAGMPQPIMRQQIVADNIHGETGLDGPVFEPLTRQAESTHAVKYIIDTLMASDGDITLVPVGPLSNIAVAMRMQPAILPKIREIVLMGGAYGTGNFTPSAEFNIFADPEAARVVFTSGVPLVMMGLDLTNQTVCTPDVIARMERAGGPAGELFSDIMNFTLKTQFENYGLAGGPVHDATCIGYLINPDGIKTQEMYVEVDVNSGPCYGRTVCDELGVLGKPANTKVGITIDTDWFWGLVEECVRGYIKTH</sequence>
<organism>
    <name type="scientific">Escherichia coli (strain K12)</name>
    <dbReference type="NCBI Taxonomy" id="83333"/>
    <lineage>
        <taxon>Bacteria</taxon>
        <taxon>Pseudomonadati</taxon>
        <taxon>Pseudomonadota</taxon>
        <taxon>Gammaproteobacteria</taxon>
        <taxon>Enterobacterales</taxon>
        <taxon>Enterobacteriaceae</taxon>
        <taxon>Escherichia</taxon>
    </lineage>
</organism>
<evidence type="ECO:0000250" key="1"/>
<evidence type="ECO:0000255" key="2"/>
<evidence type="ECO:0000269" key="3">
    <source>
    </source>
</evidence>
<evidence type="ECO:0000305" key="4"/>
<evidence type="ECO:0007829" key="5">
    <source>
        <dbReference type="PDB" id="1Q8F"/>
    </source>
</evidence>
<evidence type="ECO:0007829" key="6">
    <source>
        <dbReference type="PDB" id="3B9X"/>
    </source>
</evidence>
<gene>
    <name type="primary">rihB</name>
    <name type="synonym">yeiK</name>
    <name type="ordered locus">b2162</name>
    <name type="ordered locus">JW2149</name>
</gene>
<proteinExistence type="evidence at protein level"/>
<feature type="chain" id="PRO_0000206824" description="Pyrimidine-specific ribonucleoside hydrolase RihB">
    <location>
        <begin position="1"/>
        <end position="313"/>
    </location>
</feature>
<feature type="active site" description="Proton acceptor" evidence="2">
    <location>
        <position position="11"/>
    </location>
</feature>
<feature type="binding site">
    <location>
        <position position="11"/>
    </location>
    <ligand>
        <name>Ca(2+)</name>
        <dbReference type="ChEBI" id="CHEBI:29108"/>
    </ligand>
</feature>
<feature type="binding site">
    <location>
        <position position="16"/>
    </location>
    <ligand>
        <name>Ca(2+)</name>
        <dbReference type="ChEBI" id="CHEBI:29108"/>
    </ligand>
</feature>
<feature type="binding site">
    <location>
        <position position="124"/>
    </location>
    <ligand>
        <name>Ca(2+)</name>
        <dbReference type="ChEBI" id="CHEBI:29108"/>
    </ligand>
</feature>
<feature type="binding site" evidence="1">
    <location>
        <position position="227"/>
    </location>
    <ligand>
        <name>substrate</name>
    </ligand>
</feature>
<feature type="binding site" evidence="1">
    <location>
        <position position="239"/>
    </location>
    <ligand>
        <name>substrate</name>
    </ligand>
</feature>
<feature type="binding site">
    <location>
        <position position="240"/>
    </location>
    <ligand>
        <name>Ca(2+)</name>
        <dbReference type="ChEBI" id="CHEBI:29108"/>
    </ligand>
</feature>
<feature type="mutagenesis site" description="Increases KM for uridine 2-fold. Increases kcat 3-fold." evidence="3">
    <original>H</original>
    <variation>N</variation>
    <location>
        <position position="82"/>
    </location>
</feature>
<feature type="mutagenesis site" description="Increases KM for uridine 13-fold. No effect on kcat." evidence="3">
    <original>H</original>
    <variation>A</variation>
    <location>
        <position position="239"/>
    </location>
</feature>
<feature type="strand" evidence="5">
    <location>
        <begin position="4"/>
        <end position="10"/>
    </location>
</feature>
<feature type="helix" evidence="5">
    <location>
        <begin position="14"/>
        <end position="25"/>
    </location>
</feature>
<feature type="strand" evidence="5">
    <location>
        <begin position="29"/>
        <end position="36"/>
    </location>
</feature>
<feature type="strand" evidence="5">
    <location>
        <begin position="38"/>
        <end position="41"/>
    </location>
</feature>
<feature type="helix" evidence="5">
    <location>
        <begin position="43"/>
        <end position="56"/>
    </location>
</feature>
<feature type="strand" evidence="5">
    <location>
        <begin position="63"/>
        <end position="65"/>
    </location>
</feature>
<feature type="strand" evidence="5">
    <location>
        <begin position="71"/>
        <end position="73"/>
    </location>
</feature>
<feature type="helix" evidence="5">
    <location>
        <begin position="79"/>
        <end position="82"/>
    </location>
</feature>
<feature type="turn" evidence="6">
    <location>
        <begin position="83"/>
        <end position="85"/>
    </location>
</feature>
<feature type="helix" evidence="5">
    <location>
        <begin position="104"/>
        <end position="114"/>
    </location>
</feature>
<feature type="strand" evidence="5">
    <location>
        <begin position="119"/>
        <end position="123"/>
    </location>
</feature>
<feature type="helix" evidence="5">
    <location>
        <begin position="128"/>
        <end position="136"/>
    </location>
</feature>
<feature type="helix" evidence="5">
    <location>
        <begin position="138"/>
        <end position="143"/>
    </location>
</feature>
<feature type="strand" evidence="5">
    <location>
        <begin position="144"/>
        <end position="150"/>
    </location>
</feature>
<feature type="strand" evidence="5">
    <location>
        <begin position="158"/>
        <end position="162"/>
    </location>
</feature>
<feature type="helix" evidence="5">
    <location>
        <begin position="165"/>
        <end position="168"/>
    </location>
</feature>
<feature type="helix" evidence="5">
    <location>
        <begin position="171"/>
        <end position="178"/>
    </location>
</feature>
<feature type="strand" evidence="5">
    <location>
        <begin position="184"/>
        <end position="187"/>
    </location>
</feature>
<feature type="helix" evidence="5">
    <location>
        <begin position="189"/>
        <end position="192"/>
    </location>
</feature>
<feature type="helix" evidence="5">
    <location>
        <begin position="193"/>
        <end position="195"/>
    </location>
</feature>
<feature type="helix" evidence="5">
    <location>
        <begin position="199"/>
        <end position="208"/>
    </location>
</feature>
<feature type="helix" evidence="5">
    <location>
        <begin position="210"/>
        <end position="231"/>
    </location>
</feature>
<feature type="strand" evidence="5">
    <location>
        <begin position="234"/>
        <end position="237"/>
    </location>
</feature>
<feature type="helix" evidence="5">
    <location>
        <begin position="241"/>
        <end position="248"/>
    </location>
</feature>
<feature type="helix" evidence="5">
    <location>
        <begin position="250"/>
        <end position="252"/>
    </location>
</feature>
<feature type="strand" evidence="5">
    <location>
        <begin position="253"/>
        <end position="258"/>
    </location>
</feature>
<feature type="strand" evidence="5">
    <location>
        <begin position="260"/>
        <end position="262"/>
    </location>
</feature>
<feature type="turn" evidence="5">
    <location>
        <begin position="268"/>
        <end position="271"/>
    </location>
</feature>
<feature type="strand" evidence="5">
    <location>
        <begin position="273"/>
        <end position="275"/>
    </location>
</feature>
<feature type="strand" evidence="5">
    <location>
        <begin position="287"/>
        <end position="293"/>
    </location>
</feature>
<feature type="helix" evidence="5">
    <location>
        <begin position="295"/>
        <end position="307"/>
    </location>
</feature>